<gene>
    <name type="ORF">BBLF1</name>
</gene>
<feature type="initiator methionine" description="Removed; by host" evidence="1">
    <location>
        <position position="1"/>
    </location>
</feature>
<feature type="chain" id="PRO_0000415970" description="Cytoplasmic envelopment protein 3" evidence="1">
    <location>
        <begin position="2"/>
        <end position="75"/>
    </location>
</feature>
<feature type="region of interest" description="Disordered" evidence="2">
    <location>
        <begin position="53"/>
        <end position="75"/>
    </location>
</feature>
<feature type="compositionally biased region" description="Acidic residues" evidence="2">
    <location>
        <begin position="53"/>
        <end position="65"/>
    </location>
</feature>
<feature type="lipid moiety-binding region" description="N-myristoyl glycine; by host" evidence="1">
    <location>
        <position position="2"/>
    </location>
</feature>
<comment type="function">
    <text evidence="1">Plays an important role in the cytoplasmic envelopment of tegument proteins and capsids during the assembly and egress processes. Also participates in viral entry at the fusion step probably by regulating the core fusion machinery.</text>
</comment>
<comment type="subunit">
    <text evidence="1">Interacts with BGLF2; this interaction is essential for the proper localization of each protein to the assembly complex and thus for the production of infectious virus.</text>
</comment>
<comment type="subcellular location">
    <subcellularLocation>
        <location evidence="1">Virion tegument</location>
    </subcellularLocation>
    <subcellularLocation>
        <location evidence="1">Virion membrane</location>
        <topology evidence="1">Lipid-anchor</topology>
    </subcellularLocation>
    <subcellularLocation>
        <location evidence="1">Host cell membrane</location>
        <topology evidence="1">Lipid-anchor</topology>
        <orientation evidence="1">Cytoplasmic side</orientation>
    </subcellularLocation>
    <subcellularLocation>
        <location evidence="1">Host Golgi apparatus membrane</location>
        <topology evidence="1">Lipid-anchor</topology>
        <orientation evidence="1">Cytoplasmic side</orientation>
    </subcellularLocation>
    <text evidence="1">Virion membrane-associated tegument protein. Associates with host membrane lipids rafts. During virion morphogenesis, this protein probably accumulates in the endosomes and trans-Golgi where secondary envelopment occurs. It is probably transported to the cell surface from where it is endocytosed and directed to the trans-Golgi network (TGN).</text>
</comment>
<comment type="PTM">
    <text evidence="1">Myristoylation and palmitoylation (probably on one or more of the nearby cysteines at the N-terminus) enable membrane-binding and Golgi apparatus-specific targeting and are essential for efficient packaging.</text>
</comment>
<comment type="PTM">
    <text evidence="1">Phosphorylated. Phosphorylation does not seem to be required for recycling to the host Golgi apparatus. Packaging is selective for underphosphorylated forms.</text>
</comment>
<comment type="similarity">
    <text evidence="1">Belongs to the herpesviridae cytoplasmic envelopment protein 3 family.</text>
</comment>
<name>CEP3_EBVA8</name>
<accession>P0CK52</accession>
<accession>P03216</accession>
<accession>Q777D3</accession>
<sequence length="75" mass="8470">MGALWSLCRRRVNSIGDVDGGIINLYNDYEEFNLETTKLIAAEEGRACGETNEGLEYDEDSENDELLFLPNKKPN</sequence>
<organismHost>
    <name type="scientific">Homo sapiens</name>
    <name type="common">Human</name>
    <dbReference type="NCBI Taxonomy" id="9606"/>
</organismHost>
<dbReference type="EMBL" id="DQ279927">
    <property type="protein sequence ID" value="ABB89260.1"/>
    <property type="molecule type" value="Genomic_DNA"/>
</dbReference>
<dbReference type="RefSeq" id="YP_001129480.1">
    <property type="nucleotide sequence ID" value="NC_009334.1"/>
</dbReference>
<dbReference type="RefSeq" id="YP_401686.1">
    <property type="nucleotide sequence ID" value="NC_007605.1"/>
</dbReference>
<dbReference type="DNASU" id="3783765"/>
<dbReference type="GeneID" id="3783765"/>
<dbReference type="KEGG" id="vg:3783765"/>
<dbReference type="KEGG" id="vg:5176158"/>
<dbReference type="Proteomes" id="UP000007639">
    <property type="component" value="Genome"/>
</dbReference>
<dbReference type="GO" id="GO:0044178">
    <property type="term" value="C:host cell Golgi membrane"/>
    <property type="evidence" value="ECO:0007669"/>
    <property type="project" value="UniProtKB-SubCell"/>
</dbReference>
<dbReference type="GO" id="GO:0020002">
    <property type="term" value="C:host cell plasma membrane"/>
    <property type="evidence" value="ECO:0007669"/>
    <property type="project" value="UniProtKB-SubCell"/>
</dbReference>
<dbReference type="GO" id="GO:0016020">
    <property type="term" value="C:membrane"/>
    <property type="evidence" value="ECO:0007669"/>
    <property type="project" value="UniProtKB-KW"/>
</dbReference>
<dbReference type="GO" id="GO:0019033">
    <property type="term" value="C:viral tegument"/>
    <property type="evidence" value="ECO:0007669"/>
    <property type="project" value="UniProtKB-SubCell"/>
</dbReference>
<dbReference type="GO" id="GO:0055036">
    <property type="term" value="C:virion membrane"/>
    <property type="evidence" value="ECO:0007669"/>
    <property type="project" value="UniProtKB-SubCell"/>
</dbReference>
<dbReference type="GO" id="GO:0046760">
    <property type="term" value="P:viral budding from Golgi membrane"/>
    <property type="evidence" value="ECO:0000314"/>
    <property type="project" value="UniProtKB"/>
</dbReference>
<dbReference type="HAMAP" id="MF_04042">
    <property type="entry name" value="HSV_CEP3_gammahv"/>
    <property type="match status" value="1"/>
</dbReference>
<dbReference type="InterPro" id="IPR024360">
    <property type="entry name" value="Herpesvirus_CEP3"/>
</dbReference>
<dbReference type="Pfam" id="PF10813">
    <property type="entry name" value="Herpesvir_UL11"/>
    <property type="match status" value="1"/>
</dbReference>
<proteinExistence type="inferred from homology"/>
<organism>
    <name type="scientific">Epstein-Barr virus (strain AG876)</name>
    <name type="common">HHV-4</name>
    <name type="synonym">Human herpesvirus 4</name>
    <dbReference type="NCBI Taxonomy" id="82830"/>
    <lineage>
        <taxon>Viruses</taxon>
        <taxon>Duplodnaviria</taxon>
        <taxon>Heunggongvirae</taxon>
        <taxon>Peploviricota</taxon>
        <taxon>Herviviricetes</taxon>
        <taxon>Herpesvirales</taxon>
        <taxon>Orthoherpesviridae</taxon>
        <taxon>Gammaherpesvirinae</taxon>
        <taxon>Lymphocryptovirus</taxon>
        <taxon>Lymphocryptovirus humangamma4</taxon>
        <taxon>Epstein-Barr virus (strain GD1)</taxon>
    </lineage>
</organism>
<evidence type="ECO:0000255" key="1">
    <source>
        <dbReference type="HAMAP-Rule" id="MF_04042"/>
    </source>
</evidence>
<evidence type="ECO:0000256" key="2">
    <source>
        <dbReference type="SAM" id="MobiDB-lite"/>
    </source>
</evidence>
<keyword id="KW-1032">Host cell membrane</keyword>
<keyword id="KW-1040">Host Golgi apparatus</keyword>
<keyword id="KW-1043">Host membrane</keyword>
<keyword id="KW-0449">Lipoprotein</keyword>
<keyword id="KW-0472">Membrane</keyword>
<keyword id="KW-0519">Myristate</keyword>
<keyword id="KW-0564">Palmitate</keyword>
<keyword id="KW-0597">Phosphoprotein</keyword>
<keyword id="KW-1185">Reference proteome</keyword>
<keyword id="KW-0946">Virion</keyword>
<keyword id="KW-0920">Virion tegument</keyword>
<reference key="1">
    <citation type="journal article" date="2006" name="Virology">
        <title>The genome of Epstein-Barr virus type 2 strain AG876.</title>
        <authorList>
            <person name="Dolan A."/>
            <person name="Addison C."/>
            <person name="Gatherer D."/>
            <person name="Davison A.J."/>
            <person name="McGeoch D.J."/>
        </authorList>
    </citation>
    <scope>NUCLEOTIDE SEQUENCE [LARGE SCALE GENOMIC DNA]</scope>
</reference>
<protein>
    <recommendedName>
        <fullName evidence="1">Cytoplasmic envelopment protein 3</fullName>
    </recommendedName>
</protein>